<organism>
    <name type="scientific">Mus musculus</name>
    <name type="common">Mouse</name>
    <dbReference type="NCBI Taxonomy" id="10090"/>
    <lineage>
        <taxon>Eukaryota</taxon>
        <taxon>Metazoa</taxon>
        <taxon>Chordata</taxon>
        <taxon>Craniata</taxon>
        <taxon>Vertebrata</taxon>
        <taxon>Euteleostomi</taxon>
        <taxon>Mammalia</taxon>
        <taxon>Eutheria</taxon>
        <taxon>Euarchontoglires</taxon>
        <taxon>Glires</taxon>
        <taxon>Rodentia</taxon>
        <taxon>Myomorpha</taxon>
        <taxon>Muroidea</taxon>
        <taxon>Muridae</taxon>
        <taxon>Murinae</taxon>
        <taxon>Mus</taxon>
        <taxon>Mus</taxon>
    </lineage>
</organism>
<protein>
    <recommendedName>
        <fullName>Replication factor C subunit 1</fullName>
    </recommendedName>
    <alternativeName>
        <fullName>A1-P145</fullName>
    </alternativeName>
    <alternativeName>
        <fullName>Activator 1 140 kDa subunit</fullName>
        <shortName>A1 140 kDa subunit</shortName>
    </alternativeName>
    <alternativeName>
        <fullName>Activator 1 large subunit</fullName>
    </alternativeName>
    <alternativeName>
        <fullName>Activator 1 subunit 1</fullName>
    </alternativeName>
    <alternativeName>
        <fullName>Differentiation-specific element-binding protein</fullName>
    </alternativeName>
    <alternativeName>
        <fullName>ISRE-binding protein</fullName>
    </alternativeName>
    <alternativeName>
        <fullName>Replication factor C 140 kDa subunit</fullName>
        <shortName>RF-C 140 kDa subunit</shortName>
        <shortName>RFC140</shortName>
    </alternativeName>
    <alternativeName>
        <fullName>Replication factor C large subunit</fullName>
    </alternativeName>
</protein>
<name>RFC1_MOUSE</name>
<reference key="1">
    <citation type="journal article" date="1993" name="Proc. Natl. Acad. Sci. U.S.A.">
        <title>Cloning of the large subunit of activator 1 (replication factor C) reveals homology with bacterial DNA ligases.</title>
        <authorList>
            <person name="Burbelo P.D."/>
            <person name="Utani A."/>
            <person name="Pan Z."/>
            <person name="Yamada Y."/>
        </authorList>
    </citation>
    <scope>NUCLEOTIDE SEQUENCE [MRNA] (ISOFORM 1)</scope>
    <source>
        <strain>BALB/cJ</strain>
    </source>
</reference>
<reference key="2">
    <citation type="journal article" date="1994" name="Mol. Cell. Biol.">
        <title>Cloning, expression, and chromosomal localization of the 140-kilodalton subunit of replication factor C from mice and humans.</title>
        <authorList>
            <person name="Luckow B."/>
            <person name="Bunz F."/>
            <person name="Stillman B."/>
            <person name="Lichter P."/>
            <person name="Schuetz G."/>
        </authorList>
    </citation>
    <scope>NUCLEOTIDE SEQUENCE [MRNA] (ISOFORM 1)</scope>
    <source>
        <tissue>Liver</tissue>
    </source>
</reference>
<reference key="3">
    <citation type="journal article" date="1995" name="Mol. Endocrinol.">
        <title>Differentiation-specific element binding protein (DSEB) binds to a defined element in the promoter of the angiotensinogen gene required for the irreversible induction of gene expression during differentiation of 3T3-L1 adipoblasts to adipocytes.</title>
        <authorList>
            <person name="McGehee Habener J.F."/>
        </authorList>
    </citation>
    <scope>NUCLEOTIDE SEQUENCE [MRNA] (ISOFORM 2)</scope>
    <source>
        <strain>SWR/J</strain>
    </source>
</reference>
<reference key="4">
    <citation type="submission" date="1994-02" db="EMBL/GenBank/DDBJ databases">
        <authorList>
            <person name="Haque S.J."/>
        </authorList>
    </citation>
    <scope>NUCLEOTIDE SEQUENCE [MRNA] (ISOFORM 2)</scope>
</reference>
<reference key="5">
    <citation type="submission" date="1994-10" db="EMBL/GenBank/DDBJ databases">
        <authorList>
            <person name="Lossie A.C."/>
            <person name="Haugen B.H."/>
            <person name="Wood W.M."/>
            <person name="Camper S.A."/>
            <person name="Gordon D.F."/>
        </authorList>
    </citation>
    <scope>NUCLEOTIDE SEQUENCE [MRNA] OF 1-565</scope>
    <source>
        <strain>LAF1</strain>
    </source>
</reference>
<reference key="6">
    <citation type="journal article" date="1990" name="J. Interferon Res.">
        <title>Evaluation of inter- and intramolecular primary structure homologies of interferons by a Monte Carlo method.</title>
        <authorList>
            <person name="Haque S.J."/>
            <person name="Kumar A."/>
            <person name="Fischer T."/>
            <person name="Rutherford M.N."/>
            <person name="Williams B.R."/>
        </authorList>
    </citation>
    <scope>NUCLEOTIDE SEQUENCE [MRNA] OF 354-528</scope>
</reference>
<reference key="7">
    <citation type="journal article" date="2007" name="Proc. Natl. Acad. Sci. U.S.A.">
        <title>Large-scale phosphorylation analysis of mouse liver.</title>
        <authorList>
            <person name="Villen J."/>
            <person name="Beausoleil S.A."/>
            <person name="Gerber S.A."/>
            <person name="Gygi S.P."/>
        </authorList>
    </citation>
    <scope>PHOSPHORYLATION [LARGE SCALE ANALYSIS] AT SER-68; SER-70; SER-107 AND THR-109</scope>
    <scope>IDENTIFICATION BY MASS SPECTROMETRY [LARGE SCALE ANALYSIS]</scope>
    <source>
        <tissue>Liver</tissue>
    </source>
</reference>
<reference key="8">
    <citation type="journal article" date="2009" name="Immunity">
        <title>The phagosomal proteome in interferon-gamma-activated macrophages.</title>
        <authorList>
            <person name="Trost M."/>
            <person name="English L."/>
            <person name="Lemieux S."/>
            <person name="Courcelles M."/>
            <person name="Desjardins M."/>
            <person name="Thibault P."/>
        </authorList>
    </citation>
    <scope>PHOSPHORYLATION [LARGE SCALE ANALYSIS] AT SER-244</scope>
    <scope>IDENTIFICATION BY MASS SPECTROMETRY [LARGE SCALE ANALYSIS]</scope>
</reference>
<reference key="9">
    <citation type="journal article" date="2009" name="Mol. Cell. Proteomics">
        <title>Large scale localization of protein phosphorylation by use of electron capture dissociation mass spectrometry.</title>
        <authorList>
            <person name="Sweet S.M."/>
            <person name="Bailey C.M."/>
            <person name="Cunningham D.L."/>
            <person name="Heath J.K."/>
            <person name="Cooper H.J."/>
        </authorList>
    </citation>
    <scope>IDENTIFICATION BY MASS SPECTROMETRY [LARGE SCALE ANALYSIS]</scope>
    <source>
        <tissue>Embryonic fibroblast</tissue>
    </source>
</reference>
<reference key="10">
    <citation type="journal article" date="2010" name="Cell">
        <title>A tissue-specific atlas of mouse protein phosphorylation and expression.</title>
        <authorList>
            <person name="Huttlin E.L."/>
            <person name="Jedrychowski M.P."/>
            <person name="Elias J.E."/>
            <person name="Goswami T."/>
            <person name="Rad R."/>
            <person name="Beausoleil S.A."/>
            <person name="Villen J."/>
            <person name="Haas W."/>
            <person name="Sowa M.E."/>
            <person name="Gygi S.P."/>
        </authorList>
    </citation>
    <scope>PHOSPHORYLATION [LARGE SCALE ANALYSIS] AT SER-68; SER-70; SER-107; THR-109; SER-155; THR-160; SER-244; SER-250; SER-253; SER-535 AND SER-1090</scope>
    <scope>IDENTIFICATION BY MASS SPECTROMETRY [LARGE SCALE ANALYSIS]</scope>
    <source>
        <tissue>Brain</tissue>
        <tissue>Brown adipose tissue</tissue>
        <tissue>Heart</tissue>
        <tissue>Kidney</tissue>
        <tissue>Liver</tissue>
        <tissue>Lung</tissue>
        <tissue>Pancreas</tissue>
        <tissue>Spleen</tissue>
        <tissue>Testis</tissue>
    </source>
</reference>
<gene>
    <name type="primary">Rfc1</name>
    <name type="synonym">Ibf-1</name>
    <name type="synonym">Recc1</name>
</gene>
<dbReference type="EMBL" id="U01222">
    <property type="protein sequence ID" value="AAA21643.1"/>
    <property type="molecule type" value="mRNA"/>
</dbReference>
<dbReference type="EMBL" id="X72711">
    <property type="protein sequence ID" value="CAA51260.1"/>
    <property type="molecule type" value="mRNA"/>
</dbReference>
<dbReference type="EMBL" id="U36441">
    <property type="protein sequence ID" value="AAA79698.1"/>
    <property type="molecule type" value="mRNA"/>
</dbReference>
<dbReference type="EMBL" id="U07157">
    <property type="protein sequence ID" value="AAC52140.1"/>
    <property type="molecule type" value="mRNA"/>
</dbReference>
<dbReference type="EMBL" id="U15037">
    <property type="protein sequence ID" value="AAB60452.1"/>
    <property type="molecule type" value="mRNA"/>
</dbReference>
<dbReference type="CCDS" id="CCDS39096.1">
    <molecule id="P35601-1"/>
</dbReference>
<dbReference type="CCDS" id="CCDS84884.1">
    <molecule id="P35601-2"/>
</dbReference>
<dbReference type="PIR" id="A49393">
    <property type="entry name" value="A49393"/>
</dbReference>
<dbReference type="RefSeq" id="NP_035388.2">
    <property type="nucleotide sequence ID" value="NM_011258.2"/>
</dbReference>
<dbReference type="BMRB" id="P35601"/>
<dbReference type="SMR" id="P35601"/>
<dbReference type="BioGRID" id="202846">
    <property type="interactions" value="20"/>
</dbReference>
<dbReference type="ComplexPortal" id="CPX-472">
    <property type="entry name" value="DNA replication factor C complex"/>
</dbReference>
<dbReference type="CORUM" id="P35601"/>
<dbReference type="FunCoup" id="P35601">
    <property type="interactions" value="3528"/>
</dbReference>
<dbReference type="STRING" id="10090.ENSMUSP00000144954"/>
<dbReference type="GlyGen" id="P35601">
    <property type="glycosylation" value="1 site, 1 O-linked glycan (1 site)"/>
</dbReference>
<dbReference type="iPTMnet" id="P35601"/>
<dbReference type="PhosphoSitePlus" id="P35601"/>
<dbReference type="SwissPalm" id="P35601"/>
<dbReference type="jPOST" id="P35601"/>
<dbReference type="PaxDb" id="10090-ENSMUSP00000031092"/>
<dbReference type="PeptideAtlas" id="P35601"/>
<dbReference type="ProteomicsDB" id="255290">
    <molecule id="P35601-1"/>
</dbReference>
<dbReference type="ProteomicsDB" id="255291">
    <molecule id="P35601-2"/>
</dbReference>
<dbReference type="Pumba" id="P35601"/>
<dbReference type="DNASU" id="19687"/>
<dbReference type="GeneID" id="19687"/>
<dbReference type="KEGG" id="mmu:19687"/>
<dbReference type="AGR" id="MGI:97891"/>
<dbReference type="CTD" id="5981"/>
<dbReference type="MGI" id="MGI:97891">
    <property type="gene designation" value="Rfc1"/>
</dbReference>
<dbReference type="eggNOG" id="KOG1968">
    <property type="taxonomic scope" value="Eukaryota"/>
</dbReference>
<dbReference type="InParanoid" id="P35601"/>
<dbReference type="PhylomeDB" id="P35601"/>
<dbReference type="Reactome" id="R-MMU-110312">
    <property type="pathway name" value="Translesion synthesis by REV1"/>
</dbReference>
<dbReference type="Reactome" id="R-MMU-110314">
    <property type="pathway name" value="Recognition of DNA damage by PCNA-containing replication complex"/>
</dbReference>
<dbReference type="Reactome" id="R-MMU-110320">
    <property type="pathway name" value="Translesion Synthesis by POLH"/>
</dbReference>
<dbReference type="Reactome" id="R-MMU-174411">
    <property type="pathway name" value="Polymerase switching on the C-strand of the telomere"/>
</dbReference>
<dbReference type="Reactome" id="R-MMU-5651801">
    <property type="pathway name" value="PCNA-Dependent Long Patch Base Excision Repair"/>
</dbReference>
<dbReference type="Reactome" id="R-MMU-5655862">
    <property type="pathway name" value="Translesion synthesis by POLK"/>
</dbReference>
<dbReference type="Reactome" id="R-MMU-5656121">
    <property type="pathway name" value="Translesion synthesis by POLI"/>
</dbReference>
<dbReference type="Reactome" id="R-MMU-5656169">
    <property type="pathway name" value="Termination of translesion DNA synthesis"/>
</dbReference>
<dbReference type="Reactome" id="R-MMU-5685942">
    <property type="pathway name" value="HDR through Homologous Recombination (HRR)"/>
</dbReference>
<dbReference type="Reactome" id="R-MMU-5696397">
    <property type="pathway name" value="Gap-filling DNA repair synthesis and ligation in GG-NER"/>
</dbReference>
<dbReference type="Reactome" id="R-MMU-5696400">
    <property type="pathway name" value="Dual Incision in GG-NER"/>
</dbReference>
<dbReference type="Reactome" id="R-MMU-6782135">
    <property type="pathway name" value="Dual incision in TC-NER"/>
</dbReference>
<dbReference type="Reactome" id="R-MMU-6782210">
    <property type="pathway name" value="Gap-filling DNA repair synthesis and ligation in TC-NER"/>
</dbReference>
<dbReference type="Reactome" id="R-MMU-69091">
    <property type="pathway name" value="Polymerase switching"/>
</dbReference>
<dbReference type="BioGRID-ORCS" id="19687">
    <property type="hits" value="26 hits in 111 CRISPR screens"/>
</dbReference>
<dbReference type="ChiTaRS" id="Rfc1">
    <property type="organism name" value="mouse"/>
</dbReference>
<dbReference type="PRO" id="PR:P35601"/>
<dbReference type="Proteomes" id="UP000000589">
    <property type="component" value="Unplaced"/>
</dbReference>
<dbReference type="RNAct" id="P35601">
    <property type="molecule type" value="protein"/>
</dbReference>
<dbReference type="GO" id="GO:0005663">
    <property type="term" value="C:DNA replication factor C complex"/>
    <property type="evidence" value="ECO:0000266"/>
    <property type="project" value="ComplexPortal"/>
</dbReference>
<dbReference type="GO" id="GO:0031391">
    <property type="term" value="C:Elg1 RFC-like complex"/>
    <property type="evidence" value="ECO:0000250"/>
    <property type="project" value="UniProtKB"/>
</dbReference>
<dbReference type="GO" id="GO:0005634">
    <property type="term" value="C:nucleus"/>
    <property type="evidence" value="ECO:0000314"/>
    <property type="project" value="MGI"/>
</dbReference>
<dbReference type="GO" id="GO:0005524">
    <property type="term" value="F:ATP binding"/>
    <property type="evidence" value="ECO:0007669"/>
    <property type="project" value="UniProtKB-KW"/>
</dbReference>
<dbReference type="GO" id="GO:0016887">
    <property type="term" value="F:ATP hydrolysis activity"/>
    <property type="evidence" value="ECO:0007669"/>
    <property type="project" value="InterPro"/>
</dbReference>
<dbReference type="GO" id="GO:0003677">
    <property type="term" value="F:DNA binding"/>
    <property type="evidence" value="ECO:0007669"/>
    <property type="project" value="UniProtKB-KW"/>
</dbReference>
<dbReference type="GO" id="GO:0003689">
    <property type="term" value="F:DNA clamp loader activity"/>
    <property type="evidence" value="ECO:0007669"/>
    <property type="project" value="InterPro"/>
</dbReference>
<dbReference type="GO" id="GO:0061860">
    <property type="term" value="F:DNA clamp unloader activity"/>
    <property type="evidence" value="ECO:0000250"/>
    <property type="project" value="UniProtKB"/>
</dbReference>
<dbReference type="GO" id="GO:0006281">
    <property type="term" value="P:DNA repair"/>
    <property type="evidence" value="ECO:0007669"/>
    <property type="project" value="InterPro"/>
</dbReference>
<dbReference type="GO" id="GO:0006261">
    <property type="term" value="P:DNA-templated DNA replication"/>
    <property type="evidence" value="ECO:0000266"/>
    <property type="project" value="ComplexPortal"/>
</dbReference>
<dbReference type="CDD" id="cd00009">
    <property type="entry name" value="AAA"/>
    <property type="match status" value="1"/>
</dbReference>
<dbReference type="CDD" id="cd17752">
    <property type="entry name" value="BRCT_RFC1"/>
    <property type="match status" value="1"/>
</dbReference>
<dbReference type="CDD" id="cd18140">
    <property type="entry name" value="HLD_clamp_RFC"/>
    <property type="match status" value="1"/>
</dbReference>
<dbReference type="FunFam" id="1.10.8.60:FF:000021">
    <property type="entry name" value="Replication factor C subunit 1"/>
    <property type="match status" value="1"/>
</dbReference>
<dbReference type="FunFam" id="1.20.272.10:FF:000005">
    <property type="entry name" value="Replication factor C subunit 1"/>
    <property type="match status" value="1"/>
</dbReference>
<dbReference type="FunFam" id="3.40.50.10190:FF:000001">
    <property type="entry name" value="Replication factor C subunit 1"/>
    <property type="match status" value="1"/>
</dbReference>
<dbReference type="FunFam" id="3.40.50.300:FF:000395">
    <property type="entry name" value="Replication factor C subunit 1"/>
    <property type="match status" value="1"/>
</dbReference>
<dbReference type="Gene3D" id="1.10.8.60">
    <property type="match status" value="1"/>
</dbReference>
<dbReference type="Gene3D" id="1.20.272.10">
    <property type="match status" value="1"/>
</dbReference>
<dbReference type="Gene3D" id="3.40.50.10190">
    <property type="entry name" value="BRCT domain"/>
    <property type="match status" value="1"/>
</dbReference>
<dbReference type="Gene3D" id="3.40.50.300">
    <property type="entry name" value="P-loop containing nucleotide triphosphate hydrolases"/>
    <property type="match status" value="1"/>
</dbReference>
<dbReference type="InterPro" id="IPR003593">
    <property type="entry name" value="AAA+_ATPase"/>
</dbReference>
<dbReference type="InterPro" id="IPR003959">
    <property type="entry name" value="ATPase_AAA_core"/>
</dbReference>
<dbReference type="InterPro" id="IPR001357">
    <property type="entry name" value="BRCT_dom"/>
</dbReference>
<dbReference type="InterPro" id="IPR036420">
    <property type="entry name" value="BRCT_dom_sf"/>
</dbReference>
<dbReference type="InterPro" id="IPR008921">
    <property type="entry name" value="DNA_pol3_clamp-load_cplx_C"/>
</dbReference>
<dbReference type="InterPro" id="IPR013725">
    <property type="entry name" value="DNA_replication_fac_RFC1_C"/>
</dbReference>
<dbReference type="InterPro" id="IPR027417">
    <property type="entry name" value="P-loop_NTPase"/>
</dbReference>
<dbReference type="InterPro" id="IPR012178">
    <property type="entry name" value="RFC1"/>
</dbReference>
<dbReference type="InterPro" id="IPR047854">
    <property type="entry name" value="RFC_lid"/>
</dbReference>
<dbReference type="PANTHER" id="PTHR23389">
    <property type="entry name" value="CHROMOSOME TRANSMISSION FIDELITY FACTOR 18"/>
    <property type="match status" value="1"/>
</dbReference>
<dbReference type="PANTHER" id="PTHR23389:SF6">
    <property type="entry name" value="REPLICATION FACTOR C SUBUNIT 1"/>
    <property type="match status" value="1"/>
</dbReference>
<dbReference type="Pfam" id="PF00004">
    <property type="entry name" value="AAA"/>
    <property type="match status" value="1"/>
</dbReference>
<dbReference type="Pfam" id="PF25361">
    <property type="entry name" value="AAA_lid_RFC1"/>
    <property type="match status" value="1"/>
</dbReference>
<dbReference type="Pfam" id="PF00533">
    <property type="entry name" value="BRCT"/>
    <property type="match status" value="1"/>
</dbReference>
<dbReference type="Pfam" id="PF08519">
    <property type="entry name" value="RFC1"/>
    <property type="match status" value="1"/>
</dbReference>
<dbReference type="PIRSF" id="PIRSF036578">
    <property type="entry name" value="RFC1"/>
    <property type="match status" value="1"/>
</dbReference>
<dbReference type="SMART" id="SM00382">
    <property type="entry name" value="AAA"/>
    <property type="match status" value="1"/>
</dbReference>
<dbReference type="SMART" id="SM00292">
    <property type="entry name" value="BRCT"/>
    <property type="match status" value="1"/>
</dbReference>
<dbReference type="SUPFAM" id="SSF52113">
    <property type="entry name" value="BRCT domain"/>
    <property type="match status" value="1"/>
</dbReference>
<dbReference type="SUPFAM" id="SSF52540">
    <property type="entry name" value="P-loop containing nucleoside triphosphate hydrolases"/>
    <property type="match status" value="1"/>
</dbReference>
<dbReference type="SUPFAM" id="SSF48019">
    <property type="entry name" value="post-AAA+ oligomerization domain-like"/>
    <property type="match status" value="1"/>
</dbReference>
<dbReference type="PROSITE" id="PS50172">
    <property type="entry name" value="BRCT"/>
    <property type="match status" value="1"/>
</dbReference>
<proteinExistence type="evidence at protein level"/>
<keyword id="KW-0010">Activator</keyword>
<keyword id="KW-0025">Alternative splicing</keyword>
<keyword id="KW-0067">ATP-binding</keyword>
<keyword id="KW-0235">DNA replication</keyword>
<keyword id="KW-0238">DNA-binding</keyword>
<keyword id="KW-1017">Isopeptide bond</keyword>
<keyword id="KW-0547">Nucleotide-binding</keyword>
<keyword id="KW-0539">Nucleus</keyword>
<keyword id="KW-0597">Phosphoprotein</keyword>
<keyword id="KW-1185">Reference proteome</keyword>
<keyword id="KW-0804">Transcription</keyword>
<keyword id="KW-0805">Transcription regulation</keyword>
<keyword id="KW-0832">Ubl conjugation</keyword>
<comment type="function">
    <text evidence="2">Subunit of the replication factor C (RFC) complex which acts during elongation of primed DNA templates by DNA polymerases delta and epsilon, and is necessary for ATP-dependent loading of proliferating cell nuclear antigen (PCNA) onto primed DNA. This subunit binds to the primer-template junction. Binds the PO-B transcription element as well as other GA rich DNA sequences. Can bind single- or double-stranded DNA.</text>
</comment>
<comment type="subunit">
    <text evidence="2">Large subunit of the RFC complex, an heteropentameric complex consisting of RFC1 and four small subunits RFC2, RFC3, RFC4 and RFC5; the RFC complex interacts with PCNA and the interaction involves RFC1.</text>
</comment>
<comment type="subcellular location">
    <subcellularLocation>
        <location>Nucleus</location>
    </subcellularLocation>
</comment>
<comment type="alternative products">
    <event type="alternative splicing"/>
    <isoform>
        <id>P35601-1</id>
        <name>1</name>
        <sequence type="displayed"/>
    </isoform>
    <isoform>
        <id>P35601-2</id>
        <name>2</name>
        <sequence type="described" ref="VSP_008444"/>
    </isoform>
</comment>
<comment type="miscellaneous">
    <molecule>Isoform 2</molecule>
    <text evidence="8">Alternative use of an acceptor site.</text>
</comment>
<comment type="similarity">
    <text evidence="8">Belongs to the activator 1 large subunit family.</text>
</comment>
<feature type="chain" id="PRO_0000121773" description="Replication factor C subunit 1">
    <location>
        <begin position="1"/>
        <end position="1131"/>
    </location>
</feature>
<feature type="domain" description="BRCT" evidence="4">
    <location>
        <begin position="399"/>
        <end position="489"/>
    </location>
</feature>
<feature type="region of interest" description="Disordered" evidence="5">
    <location>
        <begin position="14"/>
        <end position="87"/>
    </location>
</feature>
<feature type="region of interest" description="Disordered" evidence="5">
    <location>
        <begin position="92"/>
        <end position="111"/>
    </location>
</feature>
<feature type="region of interest" description="Disordered" evidence="5">
    <location>
        <begin position="120"/>
        <end position="201"/>
    </location>
</feature>
<feature type="region of interest" description="Disordered" evidence="5">
    <location>
        <begin position="225"/>
        <end position="378"/>
    </location>
</feature>
<feature type="region of interest" description="Interferon-stimulated-response-element binding region">
    <location>
        <begin position="354"/>
        <end position="528"/>
    </location>
</feature>
<feature type="region of interest" description="Disordered" evidence="5">
    <location>
        <begin position="491"/>
        <end position="525"/>
    </location>
</feature>
<feature type="region of interest" description="Disordered" evidence="5">
    <location>
        <begin position="1073"/>
        <end position="1131"/>
    </location>
</feature>
<feature type="short sequence motif" description="Nuclear localization signal" evidence="3">
    <location>
        <begin position="1104"/>
        <end position="1108"/>
    </location>
</feature>
<feature type="compositionally biased region" description="Basic and acidic residues" evidence="5">
    <location>
        <begin position="38"/>
        <end position="54"/>
    </location>
</feature>
<feature type="compositionally biased region" description="Polar residues" evidence="5">
    <location>
        <begin position="127"/>
        <end position="138"/>
    </location>
</feature>
<feature type="compositionally biased region" description="Basic and acidic residues" evidence="5">
    <location>
        <begin position="184"/>
        <end position="201"/>
    </location>
</feature>
<feature type="compositionally biased region" description="Low complexity" evidence="5">
    <location>
        <begin position="308"/>
        <end position="319"/>
    </location>
</feature>
<feature type="compositionally biased region" description="Basic and acidic residues" evidence="5">
    <location>
        <begin position="334"/>
        <end position="350"/>
    </location>
</feature>
<feature type="compositionally biased region" description="Basic and acidic residues" evidence="5">
    <location>
        <begin position="359"/>
        <end position="373"/>
    </location>
</feature>
<feature type="compositionally biased region" description="Acidic residues" evidence="5">
    <location>
        <begin position="1078"/>
        <end position="1088"/>
    </location>
</feature>
<feature type="compositionally biased region" description="Basic and acidic residues" evidence="5">
    <location>
        <begin position="1113"/>
        <end position="1123"/>
    </location>
</feature>
<feature type="binding site" evidence="1">
    <location>
        <begin position="635"/>
        <end position="642"/>
    </location>
    <ligand>
        <name>ATP</name>
        <dbReference type="ChEBI" id="CHEBI:30616"/>
    </ligand>
</feature>
<feature type="modified residue" description="Phosphotyrosine" evidence="2">
    <location>
        <position position="66"/>
    </location>
</feature>
<feature type="modified residue" description="Phosphoserine" evidence="9 11">
    <location>
        <position position="68"/>
    </location>
</feature>
<feature type="modified residue" description="Phosphoserine" evidence="9 11">
    <location>
        <position position="70"/>
    </location>
</feature>
<feature type="modified residue" description="Phosphoserine" evidence="2">
    <location>
        <position position="72"/>
    </location>
</feature>
<feature type="modified residue" description="Phosphoserine" evidence="9 11">
    <location>
        <position position="107"/>
    </location>
</feature>
<feature type="modified residue" description="Phosphothreonine" evidence="9 11">
    <location>
        <position position="109"/>
    </location>
</feature>
<feature type="modified residue" description="Phosphoserine" evidence="11">
    <location>
        <position position="155"/>
    </location>
</feature>
<feature type="modified residue" description="Phosphothreonine" evidence="11">
    <location>
        <position position="160"/>
    </location>
</feature>
<feature type="modified residue" description="Phosphothreonine" evidence="2">
    <location>
        <position position="162"/>
    </location>
</feature>
<feature type="modified residue" description="Phosphoserine" evidence="2">
    <location>
        <position position="163"/>
    </location>
</feature>
<feature type="modified residue" description="Phosphoserine" evidence="2">
    <location>
        <position position="172"/>
    </location>
</feature>
<feature type="modified residue" description="Phosphoserine" evidence="2">
    <location>
        <position position="189"/>
    </location>
</feature>
<feature type="modified residue" description="Phosphoserine" evidence="10 11">
    <location>
        <position position="244"/>
    </location>
</feature>
<feature type="modified residue" description="Phosphoserine" evidence="11">
    <location>
        <position position="250"/>
    </location>
</feature>
<feature type="modified residue" description="Phosphoserine" evidence="11">
    <location>
        <position position="253"/>
    </location>
</feature>
<feature type="modified residue" description="Phosphoserine" evidence="2">
    <location>
        <position position="281"/>
    </location>
</feature>
<feature type="modified residue" description="Phosphoserine" evidence="2">
    <location>
        <position position="309"/>
    </location>
</feature>
<feature type="modified residue" description="Phosphoserine" evidence="2">
    <location>
        <position position="365"/>
    </location>
</feature>
<feature type="modified residue" description="Phosphoserine" evidence="11">
    <location>
        <position position="535"/>
    </location>
</feature>
<feature type="modified residue" description="Phosphoserine" evidence="11">
    <location>
        <position position="1090"/>
    </location>
</feature>
<feature type="cross-link" description="Glycyl lysine isopeptide (Lys-Gly) (interchain with G-Cter in SUMO2)" evidence="2">
    <location>
        <position position="49"/>
    </location>
</feature>
<feature type="splice variant" id="VSP_008444" description="In isoform 2." evidence="6 7">
    <location>
        <position position="614"/>
    </location>
</feature>
<feature type="sequence conflict" description="In Ref. 3; AAA79698." evidence="8" ref="3">
    <original>Y</original>
    <variation>N</variation>
    <location>
        <position position="66"/>
    </location>
</feature>
<feature type="sequence conflict" description="In Ref. 4; AAC52140." evidence="8" ref="4">
    <original>E</original>
    <variation>EPDFCLSCLIFFGIQ</variation>
    <location>
        <position position="187"/>
    </location>
</feature>
<feature type="sequence conflict" description="In Ref. 5; AAB60452." evidence="8" ref="5">
    <original>V</original>
    <variation>A</variation>
    <location>
        <position position="254"/>
    </location>
</feature>
<feature type="sequence conflict" description="In Ref. 4; AAC52140." evidence="8" ref="4">
    <original>N</original>
    <variation>S</variation>
    <location>
        <position position="559"/>
    </location>
</feature>
<feature type="sequence conflict" description="In Ref. 1; AAA21643." evidence="8" ref="1">
    <original>S</original>
    <variation>N</variation>
    <location>
        <position position="945"/>
    </location>
</feature>
<feature type="sequence conflict" description="In Ref. 3; AAA79698." evidence="8" ref="3">
    <original>T</original>
    <variation>A</variation>
    <location>
        <position position="1071"/>
    </location>
</feature>
<feature type="sequence conflict" description="In Ref. 4; AAC52140." evidence="8" ref="4">
    <original>K</original>
    <variation>KQ</variation>
    <location>
        <position position="1104"/>
    </location>
</feature>
<evidence type="ECO:0000250" key="1"/>
<evidence type="ECO:0000250" key="2">
    <source>
        <dbReference type="UniProtKB" id="P35251"/>
    </source>
</evidence>
<evidence type="ECO:0000255" key="3"/>
<evidence type="ECO:0000255" key="4">
    <source>
        <dbReference type="PROSITE-ProRule" id="PRU00033"/>
    </source>
</evidence>
<evidence type="ECO:0000256" key="5">
    <source>
        <dbReference type="SAM" id="MobiDB-lite"/>
    </source>
</evidence>
<evidence type="ECO:0000303" key="6">
    <source>
    </source>
</evidence>
<evidence type="ECO:0000303" key="7">
    <source ref="4"/>
</evidence>
<evidence type="ECO:0000305" key="8"/>
<evidence type="ECO:0007744" key="9">
    <source>
    </source>
</evidence>
<evidence type="ECO:0007744" key="10">
    <source>
    </source>
</evidence>
<evidence type="ECO:0007744" key="11">
    <source>
    </source>
</evidence>
<accession>P35601</accession>
<sequence length="1131" mass="125985">MDIRKFFGVISSGKKPVNETVKNEKTKASEGTVKGKKGVKEAKVNNSGKEDASKPKQHSKKKRIIYDSDSESEETVQVKNAKKKSEKLSLSYKPGKVSQKDPVTYVSETDEDDDFVCKKAASKSKENGVSTNSYLGTSNVKKNEENVKTKNKPLSPIKLTPTSVLDYFGTESVQRSGKKMVTSKRKESSQNTEDSRLNDEAIAKQLQLDEDAELERQLHEDEEFARTLALLDEEPKIKKARKDSEEGEESFSSVQDDLSKAEKQKSPNKAELFSTARKTYSPAKHGKGRASEDAKQPCKSAHRKEACSSPKASAKLALMKAKEESSYNETELLAARRKESATEPKGEKTTPKKTKVSPTKRESVSPEDSEKKRTNYQAYRSYLNREGPKALGSKEIPKGAENCLEGLTFVITGVLESIERDEAKSLIERYGGKVTGNVSKKTNYLVMGRDSGQSKSDKAAALGTKILDEDGLLDLIRTMPGKRSKYEMAAEAEMKKEKSKLERTPQKNDQGKRKISPAKKESESKKCKLTLLKNSPMKAVKKEASTCPRGLDVKETHGNRSSNKEECLLWVDKYKPASLKNIIGQQGDQSCANKLLRWLRNWHKSSPEEKKHAAKFGKLASKDDGSSFKAALLSGPPGVGKTTTASLVCQELGYSYVELNASDTRSKNSLKAVVAESLNNTSIKGFYTSGAAPSVSARHALIMDEVDGMAGNEDRGGIQELIGLIKHTKIPIICMCNDRNHPKIRSLVHYCFDLRFQRPRVEQIKSAMLSIAFKEGLKIPPPAMNEIILGANQDVRQVLHNLSMWCAQSKALTYDQAKADSQRAKKDIRLGPFDVTRKVFAAGEETAHMSLMDKSDLFFHDYSIAPLFVQENYLHVKPVAAGGDMKKHLMLLSRAADSICDGDLVDNQIRSKQNWSLLPTQAIYASVLPGELMRGYMTQFPSFPSWLGKHSSTGKHDRIVQDLSLHMSLRTYSSKRTVNMDYLSHIRDALVRPLTSQGVEGAQHVIKLMDTYYLMKEDFENIMEVSSWGGKPSAFSKLDPKVKAAFTRAYNKEAHLTPYSLQVVKTSRLSTGPALDSEYSEEFQEDDTQSEKEQDAVETDAMIKKKTRSSKPSKSEREKESKKGKGKNWKK</sequence>